<comment type="function">
    <text evidence="1">Binds directly to 23S ribosomal RNA and is necessary for the in vitro assembly process of the 50S ribosomal subunit. It is not involved in the protein synthesizing functions of that subunit.</text>
</comment>
<comment type="similarity">
    <text evidence="1">Belongs to the bacterial ribosomal protein bL20 family.</text>
</comment>
<sequence>MPRVKRGVTARARHKKVLALAKGFRGRRGNVFRIAKQAVMKAGQYAYRDRRTKKRVFRQLWIARINAAARELGLTYSQFANGLKKASIEIDRKMLADLAVHDKAAFGSIVEQVKAKLAA</sequence>
<name>RL20_ACISJ</name>
<organism>
    <name type="scientific">Acidovorax sp. (strain JS42)</name>
    <dbReference type="NCBI Taxonomy" id="232721"/>
    <lineage>
        <taxon>Bacteria</taxon>
        <taxon>Pseudomonadati</taxon>
        <taxon>Pseudomonadota</taxon>
        <taxon>Betaproteobacteria</taxon>
        <taxon>Burkholderiales</taxon>
        <taxon>Comamonadaceae</taxon>
        <taxon>Acidovorax</taxon>
    </lineage>
</organism>
<proteinExistence type="inferred from homology"/>
<feature type="chain" id="PRO_1000048918" description="Large ribosomal subunit protein bL20">
    <location>
        <begin position="1"/>
        <end position="119"/>
    </location>
</feature>
<dbReference type="EMBL" id="CP000539">
    <property type="protein sequence ID" value="ABM42558.1"/>
    <property type="molecule type" value="Genomic_DNA"/>
</dbReference>
<dbReference type="SMR" id="A1W8I3"/>
<dbReference type="STRING" id="232721.Ajs_2397"/>
<dbReference type="KEGG" id="ajs:Ajs_2397"/>
<dbReference type="eggNOG" id="COG0292">
    <property type="taxonomic scope" value="Bacteria"/>
</dbReference>
<dbReference type="HOGENOM" id="CLU_123265_0_1_4"/>
<dbReference type="Proteomes" id="UP000000645">
    <property type="component" value="Chromosome"/>
</dbReference>
<dbReference type="GO" id="GO:1990904">
    <property type="term" value="C:ribonucleoprotein complex"/>
    <property type="evidence" value="ECO:0007669"/>
    <property type="project" value="UniProtKB-KW"/>
</dbReference>
<dbReference type="GO" id="GO:0005840">
    <property type="term" value="C:ribosome"/>
    <property type="evidence" value="ECO:0007669"/>
    <property type="project" value="UniProtKB-KW"/>
</dbReference>
<dbReference type="GO" id="GO:0019843">
    <property type="term" value="F:rRNA binding"/>
    <property type="evidence" value="ECO:0007669"/>
    <property type="project" value="UniProtKB-UniRule"/>
</dbReference>
<dbReference type="GO" id="GO:0003735">
    <property type="term" value="F:structural constituent of ribosome"/>
    <property type="evidence" value="ECO:0007669"/>
    <property type="project" value="InterPro"/>
</dbReference>
<dbReference type="GO" id="GO:0000027">
    <property type="term" value="P:ribosomal large subunit assembly"/>
    <property type="evidence" value="ECO:0007669"/>
    <property type="project" value="UniProtKB-UniRule"/>
</dbReference>
<dbReference type="GO" id="GO:0006412">
    <property type="term" value="P:translation"/>
    <property type="evidence" value="ECO:0007669"/>
    <property type="project" value="InterPro"/>
</dbReference>
<dbReference type="CDD" id="cd07026">
    <property type="entry name" value="Ribosomal_L20"/>
    <property type="match status" value="1"/>
</dbReference>
<dbReference type="FunFam" id="1.10.1900.20:FF:000001">
    <property type="entry name" value="50S ribosomal protein L20"/>
    <property type="match status" value="1"/>
</dbReference>
<dbReference type="Gene3D" id="6.10.160.10">
    <property type="match status" value="1"/>
</dbReference>
<dbReference type="Gene3D" id="1.10.1900.20">
    <property type="entry name" value="Ribosomal protein L20"/>
    <property type="match status" value="1"/>
</dbReference>
<dbReference type="HAMAP" id="MF_00382">
    <property type="entry name" value="Ribosomal_bL20"/>
    <property type="match status" value="1"/>
</dbReference>
<dbReference type="InterPro" id="IPR005813">
    <property type="entry name" value="Ribosomal_bL20"/>
</dbReference>
<dbReference type="InterPro" id="IPR049946">
    <property type="entry name" value="RIBOSOMAL_L20_CS"/>
</dbReference>
<dbReference type="InterPro" id="IPR035566">
    <property type="entry name" value="Ribosomal_protein_bL20_C"/>
</dbReference>
<dbReference type="NCBIfam" id="TIGR01032">
    <property type="entry name" value="rplT_bact"/>
    <property type="match status" value="1"/>
</dbReference>
<dbReference type="PANTHER" id="PTHR10986">
    <property type="entry name" value="39S RIBOSOMAL PROTEIN L20"/>
    <property type="match status" value="1"/>
</dbReference>
<dbReference type="Pfam" id="PF00453">
    <property type="entry name" value="Ribosomal_L20"/>
    <property type="match status" value="1"/>
</dbReference>
<dbReference type="PRINTS" id="PR00062">
    <property type="entry name" value="RIBOSOMALL20"/>
</dbReference>
<dbReference type="SUPFAM" id="SSF74731">
    <property type="entry name" value="Ribosomal protein L20"/>
    <property type="match status" value="1"/>
</dbReference>
<dbReference type="PROSITE" id="PS00937">
    <property type="entry name" value="RIBOSOMAL_L20"/>
    <property type="match status" value="1"/>
</dbReference>
<reference key="1">
    <citation type="submission" date="2006-12" db="EMBL/GenBank/DDBJ databases">
        <title>Complete sequence of chromosome 1 of Acidovorax sp. JS42.</title>
        <authorList>
            <person name="Copeland A."/>
            <person name="Lucas S."/>
            <person name="Lapidus A."/>
            <person name="Barry K."/>
            <person name="Detter J.C."/>
            <person name="Glavina del Rio T."/>
            <person name="Dalin E."/>
            <person name="Tice H."/>
            <person name="Pitluck S."/>
            <person name="Chertkov O."/>
            <person name="Brettin T."/>
            <person name="Bruce D."/>
            <person name="Han C."/>
            <person name="Tapia R."/>
            <person name="Gilna P."/>
            <person name="Schmutz J."/>
            <person name="Larimer F."/>
            <person name="Land M."/>
            <person name="Hauser L."/>
            <person name="Kyrpides N."/>
            <person name="Kim E."/>
            <person name="Stahl D."/>
            <person name="Richardson P."/>
        </authorList>
    </citation>
    <scope>NUCLEOTIDE SEQUENCE [LARGE SCALE GENOMIC DNA]</scope>
    <source>
        <strain>JS42</strain>
    </source>
</reference>
<gene>
    <name evidence="1" type="primary">rplT</name>
    <name type="ordered locus">Ajs_2397</name>
</gene>
<accession>A1W8I3</accession>
<keyword id="KW-0687">Ribonucleoprotein</keyword>
<keyword id="KW-0689">Ribosomal protein</keyword>
<keyword id="KW-0694">RNA-binding</keyword>
<keyword id="KW-0699">rRNA-binding</keyword>
<protein>
    <recommendedName>
        <fullName evidence="1">Large ribosomal subunit protein bL20</fullName>
    </recommendedName>
    <alternativeName>
        <fullName evidence="2">50S ribosomal protein L20</fullName>
    </alternativeName>
</protein>
<evidence type="ECO:0000255" key="1">
    <source>
        <dbReference type="HAMAP-Rule" id="MF_00382"/>
    </source>
</evidence>
<evidence type="ECO:0000305" key="2"/>